<dbReference type="EMBL" id="CP000759">
    <property type="protein sequence ID" value="ABS15992.1"/>
    <property type="molecule type" value="Genomic_DNA"/>
</dbReference>
<dbReference type="RefSeq" id="WP_010658483.1">
    <property type="nucleotide sequence ID" value="NC_009668.1"/>
</dbReference>
<dbReference type="SMR" id="A6X438"/>
<dbReference type="STRING" id="439375.Oant_3286"/>
<dbReference type="KEGG" id="oan:Oant_3286"/>
<dbReference type="eggNOG" id="COG2835">
    <property type="taxonomic scope" value="Bacteria"/>
</dbReference>
<dbReference type="HOGENOM" id="CLU_155659_2_2_5"/>
<dbReference type="Proteomes" id="UP000002301">
    <property type="component" value="Chromosome 2"/>
</dbReference>
<dbReference type="GO" id="GO:0005829">
    <property type="term" value="C:cytosol"/>
    <property type="evidence" value="ECO:0007669"/>
    <property type="project" value="TreeGrafter"/>
</dbReference>
<dbReference type="FunFam" id="2.20.25.10:FF:000002">
    <property type="entry name" value="UPF0434 protein YcaR"/>
    <property type="match status" value="1"/>
</dbReference>
<dbReference type="Gene3D" id="2.20.25.10">
    <property type="match status" value="1"/>
</dbReference>
<dbReference type="HAMAP" id="MF_01187">
    <property type="entry name" value="UPF0434"/>
    <property type="match status" value="1"/>
</dbReference>
<dbReference type="InterPro" id="IPR005651">
    <property type="entry name" value="Trm112-like"/>
</dbReference>
<dbReference type="PANTHER" id="PTHR33505:SF4">
    <property type="entry name" value="PROTEIN PREY, MITOCHONDRIAL"/>
    <property type="match status" value="1"/>
</dbReference>
<dbReference type="PANTHER" id="PTHR33505">
    <property type="entry name" value="ZGC:162634"/>
    <property type="match status" value="1"/>
</dbReference>
<dbReference type="Pfam" id="PF03966">
    <property type="entry name" value="Trm112p"/>
    <property type="match status" value="1"/>
</dbReference>
<dbReference type="SUPFAM" id="SSF158997">
    <property type="entry name" value="Trm112p-like"/>
    <property type="match status" value="1"/>
</dbReference>
<sequence length="64" mass="7064">MDDKTQTGNIDVRLLELLVCPLTKGPLEYDAEHGELISRKAKLAYPVRGGIPIMLPSEARSLTE</sequence>
<proteinExistence type="inferred from homology"/>
<protein>
    <recommendedName>
        <fullName evidence="1">UPF0434 protein Oant_3286</fullName>
    </recommendedName>
</protein>
<gene>
    <name type="ordered locus">Oant_3286</name>
</gene>
<comment type="similarity">
    <text evidence="1">Belongs to the UPF0434 family.</text>
</comment>
<name>Y3286_BRUA4</name>
<organism>
    <name type="scientific">Brucella anthropi (strain ATCC 49188 / DSM 6882 / CCUG 24695 / JCM 21032 / LMG 3331 / NBRC 15819 / NCTC 12168 / Alc 37)</name>
    <name type="common">Ochrobactrum anthropi</name>
    <dbReference type="NCBI Taxonomy" id="439375"/>
    <lineage>
        <taxon>Bacteria</taxon>
        <taxon>Pseudomonadati</taxon>
        <taxon>Pseudomonadota</taxon>
        <taxon>Alphaproteobacteria</taxon>
        <taxon>Hyphomicrobiales</taxon>
        <taxon>Brucellaceae</taxon>
        <taxon>Brucella/Ochrobactrum group</taxon>
        <taxon>Brucella</taxon>
    </lineage>
</organism>
<accession>A6X438</accession>
<reference key="1">
    <citation type="journal article" date="2011" name="J. Bacteriol.">
        <title>Genome of Ochrobactrum anthropi ATCC 49188 T, a versatile opportunistic pathogen and symbiont of several eukaryotic hosts.</title>
        <authorList>
            <person name="Chain P.S."/>
            <person name="Lang D.M."/>
            <person name="Comerci D.J."/>
            <person name="Malfatti S.A."/>
            <person name="Vergez L.M."/>
            <person name="Shin M."/>
            <person name="Ugalde R.A."/>
            <person name="Garcia E."/>
            <person name="Tolmasky M.E."/>
        </authorList>
    </citation>
    <scope>NUCLEOTIDE SEQUENCE [LARGE SCALE GENOMIC DNA]</scope>
    <source>
        <strain>ATCC 49188 / DSM 6882 / CCUG 24695 / JCM 21032 / LMG 3331 / NBRC 15819 / NCTC 12168 / Alc 37</strain>
    </source>
</reference>
<evidence type="ECO:0000255" key="1">
    <source>
        <dbReference type="HAMAP-Rule" id="MF_01187"/>
    </source>
</evidence>
<keyword id="KW-1185">Reference proteome</keyword>
<feature type="chain" id="PRO_1000065847" description="UPF0434 protein Oant_3286">
    <location>
        <begin position="1"/>
        <end position="64"/>
    </location>
</feature>